<feature type="transit peptide" description="Mitochondrion" evidence="2">
    <location>
        <begin position="1"/>
        <end status="unknown"/>
    </location>
</feature>
<feature type="chain" id="PRO_0000314630" description="Probable proline--tRNA ligase, mitochondrial">
    <location>
        <begin status="unknown"/>
        <end position="425"/>
    </location>
</feature>
<dbReference type="EC" id="6.1.1.15"/>
<dbReference type="EMBL" id="CU329671">
    <property type="protein sequence ID" value="CAA21147.1"/>
    <property type="molecule type" value="Genomic_DNA"/>
</dbReference>
<dbReference type="PIR" id="T39967">
    <property type="entry name" value="T39967"/>
</dbReference>
<dbReference type="RefSeq" id="NP_595957.1">
    <property type="nucleotide sequence ID" value="NM_001021866.2"/>
</dbReference>
<dbReference type="SMR" id="O74765"/>
<dbReference type="FunCoup" id="O74765">
    <property type="interactions" value="356"/>
</dbReference>
<dbReference type="STRING" id="284812.O74765"/>
<dbReference type="PaxDb" id="4896-SPBC24C6.03.1"/>
<dbReference type="EnsemblFungi" id="SPBC24C6.03.1">
    <property type="protein sequence ID" value="SPBC24C6.03.1:pep"/>
    <property type="gene ID" value="SPBC24C6.03"/>
</dbReference>
<dbReference type="KEGG" id="spo:2540642"/>
<dbReference type="PomBase" id="SPBC24C6.03"/>
<dbReference type="VEuPathDB" id="FungiDB:SPBC24C6.03"/>
<dbReference type="eggNOG" id="KOG2324">
    <property type="taxonomic scope" value="Eukaryota"/>
</dbReference>
<dbReference type="HOGENOM" id="CLU_016739_4_2_1"/>
<dbReference type="InParanoid" id="O74765"/>
<dbReference type="OMA" id="NCDYAAN"/>
<dbReference type="PhylomeDB" id="O74765"/>
<dbReference type="PRO" id="PR:O74765"/>
<dbReference type="Proteomes" id="UP000002485">
    <property type="component" value="Chromosome II"/>
</dbReference>
<dbReference type="GO" id="GO:0005759">
    <property type="term" value="C:mitochondrial matrix"/>
    <property type="evidence" value="ECO:0000305"/>
    <property type="project" value="PomBase"/>
</dbReference>
<dbReference type="GO" id="GO:0005739">
    <property type="term" value="C:mitochondrion"/>
    <property type="evidence" value="ECO:0007005"/>
    <property type="project" value="PomBase"/>
</dbReference>
<dbReference type="GO" id="GO:0005524">
    <property type="term" value="F:ATP binding"/>
    <property type="evidence" value="ECO:0007669"/>
    <property type="project" value="UniProtKB-KW"/>
</dbReference>
<dbReference type="GO" id="GO:0004827">
    <property type="term" value="F:proline-tRNA ligase activity"/>
    <property type="evidence" value="ECO:0000318"/>
    <property type="project" value="GO_Central"/>
</dbReference>
<dbReference type="GO" id="GO:0032543">
    <property type="term" value="P:mitochondrial translation"/>
    <property type="evidence" value="ECO:0000303"/>
    <property type="project" value="PomBase"/>
</dbReference>
<dbReference type="GO" id="GO:0006433">
    <property type="term" value="P:prolyl-tRNA aminoacylation"/>
    <property type="evidence" value="ECO:0000318"/>
    <property type="project" value="GO_Central"/>
</dbReference>
<dbReference type="CDD" id="cd00861">
    <property type="entry name" value="ProRS_anticodon_short"/>
    <property type="match status" value="1"/>
</dbReference>
<dbReference type="CDD" id="cd00779">
    <property type="entry name" value="ProRS_core_prok"/>
    <property type="match status" value="1"/>
</dbReference>
<dbReference type="FunFam" id="3.30.930.10:FF:000042">
    <property type="entry name" value="probable proline--tRNA ligase, mitochondrial"/>
    <property type="match status" value="1"/>
</dbReference>
<dbReference type="FunFam" id="3.40.50.800:FF:000032">
    <property type="entry name" value="Proline--tRNA ligase"/>
    <property type="match status" value="1"/>
</dbReference>
<dbReference type="Gene3D" id="3.40.50.800">
    <property type="entry name" value="Anticodon-binding domain"/>
    <property type="match status" value="1"/>
</dbReference>
<dbReference type="Gene3D" id="3.30.930.10">
    <property type="entry name" value="Bira Bifunctional Protein, Domain 2"/>
    <property type="match status" value="1"/>
</dbReference>
<dbReference type="InterPro" id="IPR002314">
    <property type="entry name" value="aa-tRNA-synt_IIb"/>
</dbReference>
<dbReference type="InterPro" id="IPR006195">
    <property type="entry name" value="aa-tRNA-synth_II"/>
</dbReference>
<dbReference type="InterPro" id="IPR045864">
    <property type="entry name" value="aa-tRNA-synth_II/BPL/LPL"/>
</dbReference>
<dbReference type="InterPro" id="IPR004154">
    <property type="entry name" value="Anticodon-bd"/>
</dbReference>
<dbReference type="InterPro" id="IPR036621">
    <property type="entry name" value="Anticodon-bd_dom_sf"/>
</dbReference>
<dbReference type="InterPro" id="IPR002316">
    <property type="entry name" value="Pro-tRNA-ligase_IIa"/>
</dbReference>
<dbReference type="InterPro" id="IPR050062">
    <property type="entry name" value="Pro-tRNA_synthetase"/>
</dbReference>
<dbReference type="InterPro" id="IPR044140">
    <property type="entry name" value="ProRS_anticodon_short"/>
</dbReference>
<dbReference type="InterPro" id="IPR033730">
    <property type="entry name" value="ProRS_core_prok"/>
</dbReference>
<dbReference type="PANTHER" id="PTHR42753">
    <property type="entry name" value="MITOCHONDRIAL RIBOSOME PROTEIN L39/PROLYL-TRNA LIGASE FAMILY MEMBER"/>
    <property type="match status" value="1"/>
</dbReference>
<dbReference type="PANTHER" id="PTHR42753:SF2">
    <property type="entry name" value="PROLINE--TRNA LIGASE"/>
    <property type="match status" value="1"/>
</dbReference>
<dbReference type="Pfam" id="PF03129">
    <property type="entry name" value="HGTP_anticodon"/>
    <property type="match status" value="1"/>
</dbReference>
<dbReference type="Pfam" id="PF00587">
    <property type="entry name" value="tRNA-synt_2b"/>
    <property type="match status" value="1"/>
</dbReference>
<dbReference type="PRINTS" id="PR01046">
    <property type="entry name" value="TRNASYNTHPRO"/>
</dbReference>
<dbReference type="SUPFAM" id="SSF52954">
    <property type="entry name" value="Class II aaRS ABD-related"/>
    <property type="match status" value="1"/>
</dbReference>
<dbReference type="SUPFAM" id="SSF55681">
    <property type="entry name" value="Class II aaRS and biotin synthetases"/>
    <property type="match status" value="1"/>
</dbReference>
<dbReference type="PROSITE" id="PS50862">
    <property type="entry name" value="AA_TRNA_LIGASE_II"/>
    <property type="match status" value="1"/>
</dbReference>
<accession>O74765</accession>
<sequence length="425" mass="47932">MLQHLRNRASIEVLGKAIRKYNVPESANQLLIDMGFIQPSMPGIFQYLPLGLRVQNKICDLLHISMRSLGASAISLAHLSSKEIWEKSGRWQKTGSELFRLHDRNDREMCLAPTHEEDVTRTMATIIDSQKQLPIRVYQIGRKFRDELRPRGGLLRGREFMMKDLYTFDIDKASAMKTYEDVLQAYHTFFKEVGLPFVMVKAATGNIGGNLSHEFHYRHPVGEDVIYTCPSCHYSTNSEMLDLSKTSSDISCPNCNDQLTSTTAIEVGHAFYLGKIYSSKFNATVEVKNKQEVLHMGCYGIGVSRLIAAVAHVTKDAKGLVWPSSIAPWKVLVVPTSDNHIQSAETVYDATANVVGFDNVLLEDRQNRAFGYKMRDAELIGYPFVIVVGSRFQEEGICEIIVRSSGERYKLDKDSLHQVLLGNFL</sequence>
<reference evidence="5" key="1">
    <citation type="journal article" date="2002" name="Nature">
        <title>The genome sequence of Schizosaccharomyces pombe.</title>
        <authorList>
            <person name="Wood V."/>
            <person name="Gwilliam R."/>
            <person name="Rajandream M.A."/>
            <person name="Lyne M.H."/>
            <person name="Lyne R."/>
            <person name="Stewart A."/>
            <person name="Sgouros J.G."/>
            <person name="Peat N."/>
            <person name="Hayles J."/>
            <person name="Baker S.G."/>
            <person name="Basham D."/>
            <person name="Bowman S."/>
            <person name="Brooks K."/>
            <person name="Brown D."/>
            <person name="Brown S."/>
            <person name="Chillingworth T."/>
            <person name="Churcher C.M."/>
            <person name="Collins M."/>
            <person name="Connor R."/>
            <person name="Cronin A."/>
            <person name="Davis P."/>
            <person name="Feltwell T."/>
            <person name="Fraser A."/>
            <person name="Gentles S."/>
            <person name="Goble A."/>
            <person name="Hamlin N."/>
            <person name="Harris D.E."/>
            <person name="Hidalgo J."/>
            <person name="Hodgson G."/>
            <person name="Holroyd S."/>
            <person name="Hornsby T."/>
            <person name="Howarth S."/>
            <person name="Huckle E.J."/>
            <person name="Hunt S."/>
            <person name="Jagels K."/>
            <person name="James K.D."/>
            <person name="Jones L."/>
            <person name="Jones M."/>
            <person name="Leather S."/>
            <person name="McDonald S."/>
            <person name="McLean J."/>
            <person name="Mooney P."/>
            <person name="Moule S."/>
            <person name="Mungall K.L."/>
            <person name="Murphy L.D."/>
            <person name="Niblett D."/>
            <person name="Odell C."/>
            <person name="Oliver K."/>
            <person name="O'Neil S."/>
            <person name="Pearson D."/>
            <person name="Quail M.A."/>
            <person name="Rabbinowitsch E."/>
            <person name="Rutherford K.M."/>
            <person name="Rutter S."/>
            <person name="Saunders D."/>
            <person name="Seeger K."/>
            <person name="Sharp S."/>
            <person name="Skelton J."/>
            <person name="Simmonds M.N."/>
            <person name="Squares R."/>
            <person name="Squares S."/>
            <person name="Stevens K."/>
            <person name="Taylor K."/>
            <person name="Taylor R.G."/>
            <person name="Tivey A."/>
            <person name="Walsh S.V."/>
            <person name="Warren T."/>
            <person name="Whitehead S."/>
            <person name="Woodward J.R."/>
            <person name="Volckaert G."/>
            <person name="Aert R."/>
            <person name="Robben J."/>
            <person name="Grymonprez B."/>
            <person name="Weltjens I."/>
            <person name="Vanstreels E."/>
            <person name="Rieger M."/>
            <person name="Schaefer M."/>
            <person name="Mueller-Auer S."/>
            <person name="Gabel C."/>
            <person name="Fuchs M."/>
            <person name="Duesterhoeft A."/>
            <person name="Fritzc C."/>
            <person name="Holzer E."/>
            <person name="Moestl D."/>
            <person name="Hilbert H."/>
            <person name="Borzym K."/>
            <person name="Langer I."/>
            <person name="Beck A."/>
            <person name="Lehrach H."/>
            <person name="Reinhardt R."/>
            <person name="Pohl T.M."/>
            <person name="Eger P."/>
            <person name="Zimmermann W."/>
            <person name="Wedler H."/>
            <person name="Wambutt R."/>
            <person name="Purnelle B."/>
            <person name="Goffeau A."/>
            <person name="Cadieu E."/>
            <person name="Dreano S."/>
            <person name="Gloux S."/>
            <person name="Lelaure V."/>
            <person name="Mottier S."/>
            <person name="Galibert F."/>
            <person name="Aves S.J."/>
            <person name="Xiang Z."/>
            <person name="Hunt C."/>
            <person name="Moore K."/>
            <person name="Hurst S.M."/>
            <person name="Lucas M."/>
            <person name="Rochet M."/>
            <person name="Gaillardin C."/>
            <person name="Tallada V.A."/>
            <person name="Garzon A."/>
            <person name="Thode G."/>
            <person name="Daga R.R."/>
            <person name="Cruzado L."/>
            <person name="Jimenez J."/>
            <person name="Sanchez M."/>
            <person name="del Rey F."/>
            <person name="Benito J."/>
            <person name="Dominguez A."/>
            <person name="Revuelta J.L."/>
            <person name="Moreno S."/>
            <person name="Armstrong J."/>
            <person name="Forsburg S.L."/>
            <person name="Cerutti L."/>
            <person name="Lowe T."/>
            <person name="McCombie W.R."/>
            <person name="Paulsen I."/>
            <person name="Potashkin J."/>
            <person name="Shpakovski G.V."/>
            <person name="Ussery D."/>
            <person name="Barrell B.G."/>
            <person name="Nurse P."/>
        </authorList>
    </citation>
    <scope>NUCLEOTIDE SEQUENCE [LARGE SCALE GENOMIC DNA]</scope>
    <source>
        <strain>972 / ATCC 24843</strain>
    </source>
</reference>
<reference evidence="4" key="2">
    <citation type="journal article" date="2006" name="Nat. Biotechnol.">
        <title>ORFeome cloning and global analysis of protein localization in the fission yeast Schizosaccharomyces pombe.</title>
        <authorList>
            <person name="Matsuyama A."/>
            <person name="Arai R."/>
            <person name="Yashiroda Y."/>
            <person name="Shirai A."/>
            <person name="Kamata A."/>
            <person name="Sekido S."/>
            <person name="Kobayashi Y."/>
            <person name="Hashimoto A."/>
            <person name="Hamamoto M."/>
            <person name="Hiraoka Y."/>
            <person name="Horinouchi S."/>
            <person name="Yoshida M."/>
        </authorList>
    </citation>
    <scope>SUBCELLULAR LOCATION [LARGE SCALE ANALYSIS]</scope>
</reference>
<comment type="catalytic activity">
    <reaction evidence="1">
        <text>tRNA(Pro) + L-proline + ATP = L-prolyl-tRNA(Pro) + AMP + diphosphate</text>
        <dbReference type="Rhea" id="RHEA:14305"/>
        <dbReference type="Rhea" id="RHEA-COMP:9700"/>
        <dbReference type="Rhea" id="RHEA-COMP:9702"/>
        <dbReference type="ChEBI" id="CHEBI:30616"/>
        <dbReference type="ChEBI" id="CHEBI:33019"/>
        <dbReference type="ChEBI" id="CHEBI:60039"/>
        <dbReference type="ChEBI" id="CHEBI:78442"/>
        <dbReference type="ChEBI" id="CHEBI:78532"/>
        <dbReference type="ChEBI" id="CHEBI:456215"/>
        <dbReference type="EC" id="6.1.1.15"/>
    </reaction>
</comment>
<comment type="subcellular location">
    <subcellularLocation>
        <location evidence="3">Mitochondrion</location>
    </subcellularLocation>
</comment>
<comment type="similarity">
    <text evidence="2">Belongs to the class-II aminoacyl-tRNA synthetase family.</text>
</comment>
<name>SYPM_SCHPO</name>
<organism>
    <name type="scientific">Schizosaccharomyces pombe (strain 972 / ATCC 24843)</name>
    <name type="common">Fission yeast</name>
    <dbReference type="NCBI Taxonomy" id="284812"/>
    <lineage>
        <taxon>Eukaryota</taxon>
        <taxon>Fungi</taxon>
        <taxon>Dikarya</taxon>
        <taxon>Ascomycota</taxon>
        <taxon>Taphrinomycotina</taxon>
        <taxon>Schizosaccharomycetes</taxon>
        <taxon>Schizosaccharomycetales</taxon>
        <taxon>Schizosaccharomycetaceae</taxon>
        <taxon>Schizosaccharomyces</taxon>
    </lineage>
</organism>
<proteinExistence type="inferred from homology"/>
<protein>
    <recommendedName>
        <fullName>Probable proline--tRNA ligase, mitochondrial</fullName>
        <ecNumber>6.1.1.15</ecNumber>
    </recommendedName>
    <alternativeName>
        <fullName>Prolyl-tRNA synthetase</fullName>
        <shortName>ProRS</shortName>
    </alternativeName>
</protein>
<gene>
    <name type="ORF">SPBC24C6.03</name>
</gene>
<keyword id="KW-0030">Aminoacyl-tRNA synthetase</keyword>
<keyword id="KW-0067">ATP-binding</keyword>
<keyword id="KW-0436">Ligase</keyword>
<keyword id="KW-0496">Mitochondrion</keyword>
<keyword id="KW-0547">Nucleotide-binding</keyword>
<keyword id="KW-0648">Protein biosynthesis</keyword>
<keyword id="KW-1185">Reference proteome</keyword>
<keyword id="KW-0809">Transit peptide</keyword>
<evidence type="ECO:0000250" key="1">
    <source>
        <dbReference type="UniProtKB" id="P39965"/>
    </source>
</evidence>
<evidence type="ECO:0000255" key="2"/>
<evidence type="ECO:0000269" key="3">
    <source>
    </source>
</evidence>
<evidence type="ECO:0000305" key="4"/>
<evidence type="ECO:0000312" key="5">
    <source>
        <dbReference type="EMBL" id="CAA21147.1"/>
    </source>
</evidence>